<gene>
    <name evidence="1" type="primary">mptA</name>
    <name type="ordered locus">OE_3673F</name>
</gene>
<protein>
    <recommendedName>
        <fullName evidence="1">GTP cyclohydrolase MptA</fullName>
        <ecNumber evidence="1">3.5.4.39</ecNumber>
    </recommendedName>
    <alternativeName>
        <fullName evidence="1">GTP cyclohydrolase IV</fullName>
    </alternativeName>
</protein>
<organism>
    <name type="scientific">Halobacterium salinarum (strain ATCC 29341 / DSM 671 / R1)</name>
    <dbReference type="NCBI Taxonomy" id="478009"/>
    <lineage>
        <taxon>Archaea</taxon>
        <taxon>Methanobacteriati</taxon>
        <taxon>Methanobacteriota</taxon>
        <taxon>Stenosarchaea group</taxon>
        <taxon>Halobacteria</taxon>
        <taxon>Halobacteriales</taxon>
        <taxon>Halobacteriaceae</taxon>
        <taxon>Halobacterium</taxon>
        <taxon>Halobacterium salinarum NRC-34001</taxon>
    </lineage>
</organism>
<sequence>MSQQLPDVQATEPDVSVGLSEVGVTGVEKLVEIAREDDRPIVLMAEFEVYVDLPRGRKGIDMSRNMRVIDETLEDAVREPIYRVEEMCGEVAERLLEKHDYTTTATVEMNAELMLREETPASDLPTQGTIDIIASATAQEDAPTREEIGARVVGMTVCPCSQQMMSETARRKLAELGVGEDAVREFLRDVPQAGHSQRGHATLTVEAGGDPDVNLMDLVSVARDSMSARIYNTAKRPDEDHMTYESHANAKFVEDCVRSMARGVVEEFDHLPEDAVVTMKQSNDESIHQHNAHAERVAEFGQLREEVGSGE</sequence>
<proteinExistence type="inferred from homology"/>
<name>MPTA_HALS3</name>
<evidence type="ECO:0000255" key="1">
    <source>
        <dbReference type="HAMAP-Rule" id="MF_01527"/>
    </source>
</evidence>
<reference key="1">
    <citation type="journal article" date="2008" name="Genomics">
        <title>Evolution in the laboratory: the genome of Halobacterium salinarum strain R1 compared to that of strain NRC-1.</title>
        <authorList>
            <person name="Pfeiffer F."/>
            <person name="Schuster S.C."/>
            <person name="Broicher A."/>
            <person name="Falb M."/>
            <person name="Palm P."/>
            <person name="Rodewald K."/>
            <person name="Ruepp A."/>
            <person name="Soppa J."/>
            <person name="Tittor J."/>
            <person name="Oesterhelt D."/>
        </authorList>
    </citation>
    <scope>NUCLEOTIDE SEQUENCE [LARGE SCALE GENOMIC DNA]</scope>
    <source>
        <strain>ATCC 29341 / DSM 671 / R1</strain>
    </source>
</reference>
<keyword id="KW-0378">Hydrolase</keyword>
<keyword id="KW-0408">Iron</keyword>
<keyword id="KW-0479">Metal-binding</keyword>
<dbReference type="EC" id="3.5.4.39" evidence="1"/>
<dbReference type="EMBL" id="AM774415">
    <property type="protein sequence ID" value="CAP14388.1"/>
    <property type="molecule type" value="Genomic_DNA"/>
</dbReference>
<dbReference type="RefSeq" id="WP_010903394.1">
    <property type="nucleotide sequence ID" value="NC_010364.1"/>
</dbReference>
<dbReference type="SMR" id="B0R6L9"/>
<dbReference type="EnsemblBacteria" id="CAP14388">
    <property type="protein sequence ID" value="CAP14388"/>
    <property type="gene ID" value="OE_3673F"/>
</dbReference>
<dbReference type="GeneID" id="89350104"/>
<dbReference type="KEGG" id="hsl:OE_3673F"/>
<dbReference type="HOGENOM" id="CLU_062816_1_0_2"/>
<dbReference type="PhylomeDB" id="B0R6L9"/>
<dbReference type="UniPathway" id="UPA00065"/>
<dbReference type="Proteomes" id="UP000001321">
    <property type="component" value="Chromosome"/>
</dbReference>
<dbReference type="GO" id="GO:0003934">
    <property type="term" value="F:GTP cyclohydrolase I activity"/>
    <property type="evidence" value="ECO:0007669"/>
    <property type="project" value="InterPro"/>
</dbReference>
<dbReference type="GO" id="GO:0044682">
    <property type="term" value="F:GTP cyclohydrolase IV activity"/>
    <property type="evidence" value="ECO:0007669"/>
    <property type="project" value="UniProtKB-UniRule"/>
</dbReference>
<dbReference type="GO" id="GO:0005506">
    <property type="term" value="F:iron ion binding"/>
    <property type="evidence" value="ECO:0007669"/>
    <property type="project" value="UniProtKB-UniRule"/>
</dbReference>
<dbReference type="GO" id="GO:2001118">
    <property type="term" value="P:tetrahydromethanopterin biosynthetic process"/>
    <property type="evidence" value="ECO:0007669"/>
    <property type="project" value="UniProtKB-UniRule"/>
</dbReference>
<dbReference type="Gene3D" id="3.10.270.10">
    <property type="entry name" value="Urate Oxidase"/>
    <property type="match status" value="1"/>
</dbReference>
<dbReference type="HAMAP" id="MF_01527_A">
    <property type="entry name" value="GTP_cyclohydrol_A"/>
    <property type="match status" value="1"/>
</dbReference>
<dbReference type="InterPro" id="IPR003801">
    <property type="entry name" value="GTP_cyclohydrolase_FolE2/MptA"/>
</dbReference>
<dbReference type="InterPro" id="IPR022840">
    <property type="entry name" value="GTP_cyclohydrolase_MptA"/>
</dbReference>
<dbReference type="NCBIfam" id="TIGR00294">
    <property type="entry name" value="GTP cyclohydrolase MptA"/>
    <property type="match status" value="1"/>
</dbReference>
<dbReference type="PANTHER" id="PTHR36445">
    <property type="entry name" value="GTP CYCLOHYDROLASE MPTA"/>
    <property type="match status" value="1"/>
</dbReference>
<dbReference type="PANTHER" id="PTHR36445:SF1">
    <property type="entry name" value="GTP CYCLOHYDROLASE MPTA"/>
    <property type="match status" value="1"/>
</dbReference>
<dbReference type="Pfam" id="PF02649">
    <property type="entry name" value="GCHY-1"/>
    <property type="match status" value="1"/>
</dbReference>
<comment type="function">
    <text evidence="1">Converts GTP to 7,8-dihydro-D-neopterin 2',3'-cyclic phosphate, the first intermediate in the biosynthesis of coenzyme methanopterin.</text>
</comment>
<comment type="catalytic activity">
    <reaction evidence="1">
        <text>GTP + H2O = 7,8-dihydroneopterin 2',3'-cyclic phosphate + formate + diphosphate + H(+)</text>
        <dbReference type="Rhea" id="RHEA:25860"/>
        <dbReference type="ChEBI" id="CHEBI:15377"/>
        <dbReference type="ChEBI" id="CHEBI:15378"/>
        <dbReference type="ChEBI" id="CHEBI:15740"/>
        <dbReference type="ChEBI" id="CHEBI:33019"/>
        <dbReference type="ChEBI" id="CHEBI:37565"/>
        <dbReference type="ChEBI" id="CHEBI:58854"/>
        <dbReference type="EC" id="3.5.4.39"/>
    </reaction>
</comment>
<comment type="cofactor">
    <cofactor evidence="1">
        <name>Fe(2+)</name>
        <dbReference type="ChEBI" id="CHEBI:29033"/>
    </cofactor>
    <text evidence="1">Binds 1 Fe(2+) ion per subunit.</text>
</comment>
<comment type="pathway">
    <text evidence="1">Cofactor biosynthesis; 5,6,7,8-tetrahydromethanopterin biosynthesis.</text>
</comment>
<comment type="subunit">
    <text evidence="1">Homodimer.</text>
</comment>
<comment type="similarity">
    <text evidence="1">Belongs to the GTP cyclohydrolase IV family.</text>
</comment>
<accession>B0R6L9</accession>
<feature type="chain" id="PRO_0000372040" description="GTP cyclohydrolase MptA">
    <location>
        <begin position="1"/>
        <end position="311"/>
    </location>
</feature>
<feature type="site" description="May be catalytically important" evidence="1">
    <location>
        <position position="158"/>
    </location>
</feature>